<name>STK4_LEMCA</name>
<gene>
    <name type="primary">STK4</name>
</gene>
<evidence type="ECO:0000250" key="1"/>
<evidence type="ECO:0000250" key="2">
    <source>
        <dbReference type="UniProtKB" id="Q13043"/>
    </source>
</evidence>
<evidence type="ECO:0000250" key="3">
    <source>
        <dbReference type="UniProtKB" id="Q9JI11"/>
    </source>
</evidence>
<evidence type="ECO:0000255" key="4"/>
<evidence type="ECO:0000255" key="5">
    <source>
        <dbReference type="PROSITE-ProRule" id="PRU00159"/>
    </source>
</evidence>
<evidence type="ECO:0000255" key="6">
    <source>
        <dbReference type="PROSITE-ProRule" id="PRU00310"/>
    </source>
</evidence>
<evidence type="ECO:0000256" key="7">
    <source>
        <dbReference type="SAM" id="MobiDB-lite"/>
    </source>
</evidence>
<evidence type="ECO:0000305" key="8"/>
<comment type="function">
    <text evidence="2 3">Stress-activated, pro-apoptotic kinase which, following caspase-cleavage, enters the nucleus and induces chromatin condensation followed by internucleosomal DNA fragmentation. Key component of the Hippo signaling pathway which plays a pivotal role in organ size control and tumor suppression by restricting proliferation and promoting apoptosis. The core of this pathway is composed of a kinase cascade wherein STK3/MST2 and STK4/MST1, in complex with its regulatory protein SAV1, phosphorylates and activates LATS1/2 in complex with its regulatory protein MOB1, which in turn phosphorylates and inactivates YAP1 oncoprotein and WWTR1/TAZ. Phosphorylation of YAP1 by LATS2 inhibits its translocation into the nucleus to regulate cellular genes important for cell proliferation, cell death, and cell migration. STK3/MST2 and STK4/MST1 are required to repress proliferation of mature hepatocytes, to prevent activation of facultative adult liver stem cells (oval cells), and to inhibit tumor formation. Phosphorylates 'Ser-14' of histone H2B (H2BS14ph) during apoptosis. Phosphorylates FOXO3 upon oxidative stress, which results in its nuclear translocation and cell death initiation. Phosphorylates MOBKL1A, MOBKL1B and RASSF2. Phosphorylates TNNI3 (cardiac Tn-I) and alters its binding affinity to TNNC1 (cardiac Tn-C) and TNNT2 (cardiac Tn-T). Phosphorylates FOXO1 on 'Ser-212' and regulates its activation and stimulates transcription of PMAIP1 in a FOXO1-dependent manner. Phosphorylates SIRT1 and inhibits SIRT1-mediated p53/TP53 deacetylation, thereby promoting p53/TP53 dependent transcription and apoptosis upon DNA damage. Acts as an inhibitor of PKB/AKT1. Phosphorylates AR on 'Ser-650' and suppresses its activity by intersecting with PKB/AKT1 signaling and antagonizing formation of AR-chromatin complexes.</text>
</comment>
<comment type="catalytic activity">
    <reaction evidence="2">
        <text>L-seryl-[protein] + ATP = O-phospho-L-seryl-[protein] + ADP + H(+)</text>
        <dbReference type="Rhea" id="RHEA:17989"/>
        <dbReference type="Rhea" id="RHEA-COMP:9863"/>
        <dbReference type="Rhea" id="RHEA-COMP:11604"/>
        <dbReference type="ChEBI" id="CHEBI:15378"/>
        <dbReference type="ChEBI" id="CHEBI:29999"/>
        <dbReference type="ChEBI" id="CHEBI:30616"/>
        <dbReference type="ChEBI" id="CHEBI:83421"/>
        <dbReference type="ChEBI" id="CHEBI:456216"/>
        <dbReference type="EC" id="2.7.11.1"/>
    </reaction>
    <physiologicalReaction direction="left-to-right" evidence="2">
        <dbReference type="Rhea" id="RHEA:17990"/>
    </physiologicalReaction>
</comment>
<comment type="catalytic activity">
    <reaction evidence="2">
        <text>L-threonyl-[protein] + ATP = O-phospho-L-threonyl-[protein] + ADP + H(+)</text>
        <dbReference type="Rhea" id="RHEA:46608"/>
        <dbReference type="Rhea" id="RHEA-COMP:11060"/>
        <dbReference type="Rhea" id="RHEA-COMP:11605"/>
        <dbReference type="ChEBI" id="CHEBI:15378"/>
        <dbReference type="ChEBI" id="CHEBI:30013"/>
        <dbReference type="ChEBI" id="CHEBI:30616"/>
        <dbReference type="ChEBI" id="CHEBI:61977"/>
        <dbReference type="ChEBI" id="CHEBI:456216"/>
        <dbReference type="EC" id="2.7.11.1"/>
    </reaction>
    <physiologicalReaction direction="left-to-right" evidence="2">
        <dbReference type="Rhea" id="RHEA:46609"/>
    </physiologicalReaction>
</comment>
<comment type="cofactor">
    <cofactor evidence="1">
        <name>Mg(2+)</name>
        <dbReference type="ChEBI" id="CHEBI:18420"/>
    </cofactor>
</comment>
<comment type="activity regulation">
    <text evidence="1">Inhibited by the C-terminal non-catalytic region. Activated by caspase-cleavage. Full activation also requires homodimerization and autophosphorylation of Thr-183. Activated by RASSF1 which acts by preventing its dephosphorylation (By similarity).</text>
</comment>
<comment type="subunit">
    <text evidence="2">Homodimer; mediated via the coiled-coil region. Interacts with NORE1, which inhibits autoactivation. Interacts with and stabilizes SAV1. Interacts with RASSF1. Interacts with FOXO3. Interacts with RASSF2 (via SARAH domain). Interacts with AR, PKB/AKT1, TNNI3 and SIRT1. Interacts with DLG5 (via PDZ domain 3). Interacts with MARK3 and SCRIB in the presence of DLG5.</text>
</comment>
<comment type="subcellular location">
    <subcellularLocation>
        <location evidence="1">Cytoplasm</location>
    </subcellularLocation>
    <subcellularLocation>
        <location evidence="1">Nucleus</location>
    </subcellularLocation>
    <text evidence="1">The caspase-cleaved form cycles between the nucleus and cytoplasm.</text>
</comment>
<comment type="PTM">
    <text evidence="2">Autophosphorylated on serine and threonine residues. Phosphorylation at Thr-387 by PKB/AKT1, leads to inhibition of its: kinase activity, nuclear translocation and autophosphorylation at Thr-183. It also diminishes its cleavage by caspases and its ability to phosphorylate FOXO3 (By similarity).</text>
</comment>
<comment type="PTM">
    <text evidence="1">Proteolytically cleaved by caspase-3 during apoptosis at Asp-326 and Asp-349 resulting in a 37 kDa or a 39 kDa subunit respectively. The 39 kDa subunit is further cleaved into the 37 kDa form. Proteolytic cleavage results in kinase activation and nuclear translocation of the truncated form (MST1/N). It is less likely that cleavage at Asp-349 is a prerequisite for activation as this site is not conserved in the murine ortholog (By similarity).</text>
</comment>
<comment type="similarity">
    <text evidence="8">Belongs to the protein kinase superfamily. STE Ser/Thr protein kinase family. STE20 subfamily.</text>
</comment>
<protein>
    <recommendedName>
        <fullName>Serine/threonine-protein kinase 4</fullName>
        <ecNumber>2.7.11.1</ecNumber>
    </recommendedName>
    <component>
        <recommendedName>
            <fullName>Serine/threonine-protein kinase 4 37kDa subunit</fullName>
            <shortName>MST1/N</shortName>
        </recommendedName>
    </component>
    <component>
        <recommendedName>
            <fullName>Serine/threonine-protein kinase 4 18kDa subunit</fullName>
            <shortName>MST1/C</shortName>
        </recommendedName>
    </component>
</protein>
<organism>
    <name type="scientific">Lemur catta</name>
    <name type="common">Ring-tailed lemur</name>
    <dbReference type="NCBI Taxonomy" id="9447"/>
    <lineage>
        <taxon>Eukaryota</taxon>
        <taxon>Metazoa</taxon>
        <taxon>Chordata</taxon>
        <taxon>Craniata</taxon>
        <taxon>Vertebrata</taxon>
        <taxon>Euteleostomi</taxon>
        <taxon>Mammalia</taxon>
        <taxon>Eutheria</taxon>
        <taxon>Euarchontoglires</taxon>
        <taxon>Primates</taxon>
        <taxon>Strepsirrhini</taxon>
        <taxon>Lemuriformes</taxon>
        <taxon>Lemuridae</taxon>
        <taxon>Lemur</taxon>
    </lineage>
</organism>
<proteinExistence type="inferred from homology"/>
<reference key="1">
    <citation type="journal article" date="2007" name="Genome Res.">
        <title>Comparative sequence analyses reveal rapid and divergent evolutionary changes of the WFDC locus in the primate lineage.</title>
        <authorList>
            <consortium name="NISC comparative sequencing program"/>
            <person name="Hurle B."/>
            <person name="Swanson W."/>
            <person name="Green E.D."/>
        </authorList>
    </citation>
    <scope>NUCLEOTIDE SEQUENCE [GENOMIC DNA]</scope>
</reference>
<accession>A4K2S1</accession>
<feature type="chain" id="PRO_0000289626" description="Serine/threonine-protein kinase 4">
    <location>
        <begin position="1"/>
        <end position="487"/>
    </location>
</feature>
<feature type="chain" id="PRO_0000413737" description="Serine/threonine-protein kinase 4 37kDa subunit" evidence="1">
    <location>
        <begin position="1"/>
        <end position="326"/>
    </location>
</feature>
<feature type="chain" id="PRO_0000413738" description="Serine/threonine-protein kinase 4 18kDa subunit" evidence="1">
    <location>
        <begin position="327"/>
        <end position="487"/>
    </location>
</feature>
<feature type="domain" description="Protein kinase" evidence="5">
    <location>
        <begin position="30"/>
        <end position="281"/>
    </location>
</feature>
<feature type="domain" description="SARAH" evidence="6">
    <location>
        <begin position="433"/>
        <end position="480"/>
    </location>
</feature>
<feature type="region of interest" description="Disordered" evidence="7">
    <location>
        <begin position="305"/>
        <end position="338"/>
    </location>
</feature>
<feature type="coiled-coil region" evidence="4">
    <location>
        <begin position="290"/>
        <end position="310"/>
    </location>
</feature>
<feature type="compositionally biased region" description="Acidic residues" evidence="7">
    <location>
        <begin position="313"/>
        <end position="326"/>
    </location>
</feature>
<feature type="active site" description="Proton acceptor" evidence="5">
    <location>
        <position position="149"/>
    </location>
</feature>
<feature type="binding site" evidence="5">
    <location>
        <begin position="36"/>
        <end position="44"/>
    </location>
    <ligand>
        <name>ATP</name>
        <dbReference type="ChEBI" id="CHEBI:30616"/>
    </ligand>
</feature>
<feature type="binding site" evidence="5">
    <location>
        <position position="59"/>
    </location>
    <ligand>
        <name>ATP</name>
        <dbReference type="ChEBI" id="CHEBI:30616"/>
    </ligand>
</feature>
<feature type="site" description="Cleavage; by caspase-3" evidence="1">
    <location>
        <begin position="326"/>
        <end position="327"/>
    </location>
</feature>
<feature type="site" description="Cleavage; by caspase-3" evidence="1">
    <location>
        <begin position="349"/>
        <end position="350"/>
    </location>
</feature>
<feature type="modified residue" description="N-acetylmethionine" evidence="2">
    <location>
        <position position="1"/>
    </location>
</feature>
<feature type="modified residue" description="Phosphothreonine" evidence="2">
    <location>
        <position position="3"/>
    </location>
</feature>
<feature type="modified residue" description="Phosphothreonine; by autocatalysis" evidence="2">
    <location>
        <position position="183"/>
    </location>
</feature>
<feature type="modified residue" description="Phosphoserine" evidence="2">
    <location>
        <position position="265"/>
    </location>
</feature>
<feature type="modified residue" description="Phosphoserine" evidence="2">
    <location>
        <position position="320"/>
    </location>
</feature>
<feature type="modified residue" description="Phosphothreonine" evidence="2">
    <location>
        <position position="340"/>
    </location>
</feature>
<feature type="modified residue" description="Phosphothreonine" evidence="2">
    <location>
        <position position="367"/>
    </location>
</feature>
<feature type="modified residue" description="Phosphothreonine; by PKB/AKT1" evidence="2">
    <location>
        <position position="387"/>
    </location>
</feature>
<feature type="modified residue" description="Phosphoserine" evidence="2">
    <location>
        <position position="410"/>
    </location>
</feature>
<feature type="modified residue" description="Phosphoserine" evidence="2">
    <location>
        <position position="414"/>
    </location>
</feature>
<feature type="modified residue" description="Phosphotyrosine" evidence="3">
    <location>
        <position position="433"/>
    </location>
</feature>
<keyword id="KW-0007">Acetylation</keyword>
<keyword id="KW-0053">Apoptosis</keyword>
<keyword id="KW-0067">ATP-binding</keyword>
<keyword id="KW-0175">Coiled coil</keyword>
<keyword id="KW-0963">Cytoplasm</keyword>
<keyword id="KW-0418">Kinase</keyword>
<keyword id="KW-0460">Magnesium</keyword>
<keyword id="KW-0479">Metal-binding</keyword>
<keyword id="KW-0547">Nucleotide-binding</keyword>
<keyword id="KW-0539">Nucleus</keyword>
<keyword id="KW-0597">Phosphoprotein</keyword>
<keyword id="KW-0723">Serine/threonine-protein kinase</keyword>
<keyword id="KW-0808">Transferase</keyword>
<dbReference type="EC" id="2.7.11.1"/>
<dbReference type="EMBL" id="DP000042">
    <property type="protein sequence ID" value="ABO52956.1"/>
    <property type="molecule type" value="Genomic_DNA"/>
</dbReference>
<dbReference type="SMR" id="A4K2S1"/>
<dbReference type="GO" id="GO:0005737">
    <property type="term" value="C:cytoplasm"/>
    <property type="evidence" value="ECO:0000250"/>
    <property type="project" value="UniProtKB"/>
</dbReference>
<dbReference type="GO" id="GO:0005634">
    <property type="term" value="C:nucleus"/>
    <property type="evidence" value="ECO:0000250"/>
    <property type="project" value="UniProtKB"/>
</dbReference>
<dbReference type="GO" id="GO:0005524">
    <property type="term" value="F:ATP binding"/>
    <property type="evidence" value="ECO:0007669"/>
    <property type="project" value="UniProtKB-KW"/>
</dbReference>
<dbReference type="GO" id="GO:0046872">
    <property type="term" value="F:metal ion binding"/>
    <property type="evidence" value="ECO:0007669"/>
    <property type="project" value="UniProtKB-KW"/>
</dbReference>
<dbReference type="GO" id="GO:0106310">
    <property type="term" value="F:protein serine kinase activity"/>
    <property type="evidence" value="ECO:0007669"/>
    <property type="project" value="RHEA"/>
</dbReference>
<dbReference type="GO" id="GO:0004674">
    <property type="term" value="F:protein serine/threonine kinase activity"/>
    <property type="evidence" value="ECO:0000250"/>
    <property type="project" value="UniProtKB"/>
</dbReference>
<dbReference type="GO" id="GO:0006915">
    <property type="term" value="P:apoptotic process"/>
    <property type="evidence" value="ECO:0000250"/>
    <property type="project" value="UniProtKB"/>
</dbReference>
<dbReference type="GO" id="GO:0035329">
    <property type="term" value="P:hippo signaling"/>
    <property type="evidence" value="ECO:0000250"/>
    <property type="project" value="UniProtKB"/>
</dbReference>
<dbReference type="GO" id="GO:0051262">
    <property type="term" value="P:protein tetramerization"/>
    <property type="evidence" value="ECO:0007669"/>
    <property type="project" value="InterPro"/>
</dbReference>
<dbReference type="CDD" id="cd21887">
    <property type="entry name" value="SARAH_MST1"/>
    <property type="match status" value="1"/>
</dbReference>
<dbReference type="CDD" id="cd06612">
    <property type="entry name" value="STKc_MST1_2"/>
    <property type="match status" value="1"/>
</dbReference>
<dbReference type="FunFam" id="1.10.510.10:FF:000075">
    <property type="entry name" value="Serine/threonine-protein kinase 3"/>
    <property type="match status" value="1"/>
</dbReference>
<dbReference type="FunFam" id="3.30.200.20:FF:000410">
    <property type="entry name" value="Serine/threonine-protein kinase 3"/>
    <property type="match status" value="1"/>
</dbReference>
<dbReference type="FunFam" id="4.10.170.10:FF:000002">
    <property type="entry name" value="serine/threonine-protein kinase 3"/>
    <property type="match status" value="1"/>
</dbReference>
<dbReference type="FunFam" id="1.10.287.4270:FF:000004">
    <property type="entry name" value="Serine/threonine-protein kinase 3/4"/>
    <property type="match status" value="1"/>
</dbReference>
<dbReference type="FunFam" id="1.10.287.4270:FF:000002">
    <property type="entry name" value="Serine/threonine-protein kinase 4"/>
    <property type="match status" value="1"/>
</dbReference>
<dbReference type="Gene3D" id="1.10.287.4270">
    <property type="match status" value="1"/>
</dbReference>
<dbReference type="Gene3D" id="4.10.170.10">
    <property type="entry name" value="p53-like tetramerisation domain"/>
    <property type="match status" value="1"/>
</dbReference>
<dbReference type="Gene3D" id="1.10.510.10">
    <property type="entry name" value="Transferase(Phosphotransferase) domain 1"/>
    <property type="match status" value="1"/>
</dbReference>
<dbReference type="InterPro" id="IPR011009">
    <property type="entry name" value="Kinase-like_dom_sf"/>
</dbReference>
<dbReference type="InterPro" id="IPR024205">
    <property type="entry name" value="Mst1_2_SARAH_domain"/>
</dbReference>
<dbReference type="InterPro" id="IPR036674">
    <property type="entry name" value="p53_tetramer_sf"/>
</dbReference>
<dbReference type="InterPro" id="IPR000719">
    <property type="entry name" value="Prot_kinase_dom"/>
</dbReference>
<dbReference type="InterPro" id="IPR017441">
    <property type="entry name" value="Protein_kinase_ATP_BS"/>
</dbReference>
<dbReference type="InterPro" id="IPR011524">
    <property type="entry name" value="SARAH_dom"/>
</dbReference>
<dbReference type="InterPro" id="IPR050629">
    <property type="entry name" value="STE20/SPS1-PAK"/>
</dbReference>
<dbReference type="PANTHER" id="PTHR48012:SF2">
    <property type="entry name" value="STERILE20-LIKE KINASE, ISOFORM B"/>
    <property type="match status" value="1"/>
</dbReference>
<dbReference type="PANTHER" id="PTHR48012">
    <property type="entry name" value="STERILE20-LIKE KINASE, ISOFORM B-RELATED"/>
    <property type="match status" value="1"/>
</dbReference>
<dbReference type="Pfam" id="PF11629">
    <property type="entry name" value="Mst1_SARAH"/>
    <property type="match status" value="1"/>
</dbReference>
<dbReference type="Pfam" id="PF00069">
    <property type="entry name" value="Pkinase"/>
    <property type="match status" value="1"/>
</dbReference>
<dbReference type="SMART" id="SM00220">
    <property type="entry name" value="S_TKc"/>
    <property type="match status" value="1"/>
</dbReference>
<dbReference type="SUPFAM" id="SSF56112">
    <property type="entry name" value="Protein kinase-like (PK-like)"/>
    <property type="match status" value="1"/>
</dbReference>
<dbReference type="PROSITE" id="PS00107">
    <property type="entry name" value="PROTEIN_KINASE_ATP"/>
    <property type="match status" value="1"/>
</dbReference>
<dbReference type="PROSITE" id="PS50011">
    <property type="entry name" value="PROTEIN_KINASE_DOM"/>
    <property type="match status" value="1"/>
</dbReference>
<dbReference type="PROSITE" id="PS50951">
    <property type="entry name" value="SARAH"/>
    <property type="match status" value="1"/>
</dbReference>
<sequence>METVQLRNPPRRQLKKLDEDSLTKQPEEVFDVLEKLGEGSYGSVYKAIHKETGQIVAIKQVPVESDLQEIIKEISIMQQCDSPHVVKYYGSYFKNTDLWIVMEYCGAGSVSDIIRLRNKTLTEDEIATILQSTLKGLEYLHFMRKIHRDIKAGNILLNTEGHAKLADFGVAGQLTDTMAKRNTVIGTPFWMAPEVIQEIGYNCVADIWSLGITAIEMAEGKPPYADIHPMRAIFMIPTNPPPTFRKPELWSDNFMDFVRQCLVKSPDQRATATQLLQHPFVKSAKGVSILRDLINEAMDVKLKRQEAQQREVDQDDEENSEEDELDSGTMVRAVGDDMGTVRVASTMSDEANTMIEHDDTLPSQLGTMVINAEDEEEEGTMKRRDETMQPAKPSFLEYFEQKEKENQISSFGKSVPGPLKNSADWKVPQDGDYEFLKSWTVEDLQKRLLALDPMMEQEIEEIRQKYQSKRQPILDAIEAKKRRQQNF</sequence>